<dbReference type="EC" id="3.6.5.3" evidence="2"/>
<dbReference type="EMBL" id="BA000023">
    <property type="protein sequence ID" value="BAB65236.1"/>
    <property type="molecule type" value="Genomic_DNA"/>
</dbReference>
<dbReference type="RefSeq" id="WP_010978219.1">
    <property type="nucleotide sequence ID" value="NC_003106.2"/>
</dbReference>
<dbReference type="SMR" id="Q976B1"/>
<dbReference type="STRING" id="273063.STK_02690"/>
<dbReference type="GeneID" id="1458170"/>
<dbReference type="KEGG" id="sto:STK_02690"/>
<dbReference type="PATRIC" id="fig|273063.9.peg.320"/>
<dbReference type="eggNOG" id="arCOG01561">
    <property type="taxonomic scope" value="Archaea"/>
</dbReference>
<dbReference type="OrthoDB" id="371718at2157"/>
<dbReference type="Proteomes" id="UP000001015">
    <property type="component" value="Chromosome"/>
</dbReference>
<dbReference type="GO" id="GO:0005737">
    <property type="term" value="C:cytoplasm"/>
    <property type="evidence" value="ECO:0007669"/>
    <property type="project" value="UniProtKB-SubCell"/>
</dbReference>
<dbReference type="GO" id="GO:0005525">
    <property type="term" value="F:GTP binding"/>
    <property type="evidence" value="ECO:0007669"/>
    <property type="project" value="UniProtKB-UniRule"/>
</dbReference>
<dbReference type="GO" id="GO:0003924">
    <property type="term" value="F:GTPase activity"/>
    <property type="evidence" value="ECO:0007669"/>
    <property type="project" value="InterPro"/>
</dbReference>
<dbReference type="GO" id="GO:0003746">
    <property type="term" value="F:translation elongation factor activity"/>
    <property type="evidence" value="ECO:0007669"/>
    <property type="project" value="UniProtKB-UniRule"/>
</dbReference>
<dbReference type="CDD" id="cd01883">
    <property type="entry name" value="EF1_alpha"/>
    <property type="match status" value="1"/>
</dbReference>
<dbReference type="CDD" id="cd03693">
    <property type="entry name" value="EF1_alpha_II"/>
    <property type="match status" value="1"/>
</dbReference>
<dbReference type="CDD" id="cd03705">
    <property type="entry name" value="EF1_alpha_III"/>
    <property type="match status" value="1"/>
</dbReference>
<dbReference type="FunFam" id="2.40.30.10:FF:000003">
    <property type="entry name" value="Elongation factor 1-alpha"/>
    <property type="match status" value="1"/>
</dbReference>
<dbReference type="FunFam" id="2.40.30.10:FF:000005">
    <property type="entry name" value="Elongation factor 1-alpha"/>
    <property type="match status" value="1"/>
</dbReference>
<dbReference type="FunFam" id="3.40.50.300:FF:000255">
    <property type="entry name" value="Elongation factor 1-alpha"/>
    <property type="match status" value="1"/>
</dbReference>
<dbReference type="Gene3D" id="3.40.50.300">
    <property type="entry name" value="P-loop containing nucleotide triphosphate hydrolases"/>
    <property type="match status" value="1"/>
</dbReference>
<dbReference type="Gene3D" id="2.40.30.10">
    <property type="entry name" value="Translation factors"/>
    <property type="match status" value="2"/>
</dbReference>
<dbReference type="HAMAP" id="MF_00118_A">
    <property type="entry name" value="EF_Tu_A"/>
    <property type="match status" value="1"/>
</dbReference>
<dbReference type="InterPro" id="IPR004161">
    <property type="entry name" value="EFTu-like_2"/>
</dbReference>
<dbReference type="InterPro" id="IPR031157">
    <property type="entry name" value="G_TR_CS"/>
</dbReference>
<dbReference type="InterPro" id="IPR054696">
    <property type="entry name" value="GTP-eEF1A_C"/>
</dbReference>
<dbReference type="InterPro" id="IPR027417">
    <property type="entry name" value="P-loop_NTPase"/>
</dbReference>
<dbReference type="InterPro" id="IPR005225">
    <property type="entry name" value="Small_GTP-bd"/>
</dbReference>
<dbReference type="InterPro" id="IPR000795">
    <property type="entry name" value="T_Tr_GTP-bd_dom"/>
</dbReference>
<dbReference type="InterPro" id="IPR050100">
    <property type="entry name" value="TRAFAC_GTPase_members"/>
</dbReference>
<dbReference type="InterPro" id="IPR009000">
    <property type="entry name" value="Transl_B-barrel_sf"/>
</dbReference>
<dbReference type="InterPro" id="IPR009001">
    <property type="entry name" value="Transl_elong_EF1A/Init_IF2_C"/>
</dbReference>
<dbReference type="InterPro" id="IPR004539">
    <property type="entry name" value="Transl_elong_EF1A_euk/arc"/>
</dbReference>
<dbReference type="NCBIfam" id="TIGR00483">
    <property type="entry name" value="EF-1_alpha"/>
    <property type="match status" value="1"/>
</dbReference>
<dbReference type="NCBIfam" id="NF008969">
    <property type="entry name" value="PRK12317.1"/>
    <property type="match status" value="1"/>
</dbReference>
<dbReference type="NCBIfam" id="TIGR00231">
    <property type="entry name" value="small_GTP"/>
    <property type="match status" value="1"/>
</dbReference>
<dbReference type="PANTHER" id="PTHR23115">
    <property type="entry name" value="TRANSLATION FACTOR"/>
    <property type="match status" value="1"/>
</dbReference>
<dbReference type="Pfam" id="PF22594">
    <property type="entry name" value="GTP-eEF1A_C"/>
    <property type="match status" value="1"/>
</dbReference>
<dbReference type="Pfam" id="PF00009">
    <property type="entry name" value="GTP_EFTU"/>
    <property type="match status" value="1"/>
</dbReference>
<dbReference type="Pfam" id="PF03144">
    <property type="entry name" value="GTP_EFTU_D2"/>
    <property type="match status" value="1"/>
</dbReference>
<dbReference type="PRINTS" id="PR00315">
    <property type="entry name" value="ELONGATNFCT"/>
</dbReference>
<dbReference type="SUPFAM" id="SSF50465">
    <property type="entry name" value="EF-Tu/eEF-1alpha/eIF2-gamma C-terminal domain"/>
    <property type="match status" value="1"/>
</dbReference>
<dbReference type="SUPFAM" id="SSF52540">
    <property type="entry name" value="P-loop containing nucleoside triphosphate hydrolases"/>
    <property type="match status" value="1"/>
</dbReference>
<dbReference type="SUPFAM" id="SSF50447">
    <property type="entry name" value="Translation proteins"/>
    <property type="match status" value="1"/>
</dbReference>
<dbReference type="PROSITE" id="PS00301">
    <property type="entry name" value="G_TR_1"/>
    <property type="match status" value="1"/>
</dbReference>
<dbReference type="PROSITE" id="PS51722">
    <property type="entry name" value="G_TR_2"/>
    <property type="match status" value="1"/>
</dbReference>
<feature type="chain" id="PRO_0000090995" description="Elongation factor 1-alpha">
    <location>
        <begin position="1"/>
        <end position="435"/>
    </location>
</feature>
<feature type="domain" description="tr-type G">
    <location>
        <begin position="4"/>
        <end position="229"/>
    </location>
</feature>
<feature type="region of interest" description="G1" evidence="1">
    <location>
        <begin position="13"/>
        <end position="20"/>
    </location>
</feature>
<feature type="region of interest" description="G2" evidence="1">
    <location>
        <begin position="69"/>
        <end position="73"/>
    </location>
</feature>
<feature type="region of interest" description="G3" evidence="1">
    <location>
        <begin position="90"/>
        <end position="93"/>
    </location>
</feature>
<feature type="region of interest" description="G4" evidence="1">
    <location>
        <begin position="152"/>
        <end position="155"/>
    </location>
</feature>
<feature type="region of interest" description="G5" evidence="1">
    <location>
        <begin position="193"/>
        <end position="195"/>
    </location>
</feature>
<feature type="binding site" evidence="2">
    <location>
        <begin position="13"/>
        <end position="20"/>
    </location>
    <ligand>
        <name>GTP</name>
        <dbReference type="ChEBI" id="CHEBI:37565"/>
    </ligand>
</feature>
<feature type="binding site" evidence="2">
    <location>
        <position position="20"/>
    </location>
    <ligand>
        <name>Mg(2+)</name>
        <dbReference type="ChEBI" id="CHEBI:18420"/>
    </ligand>
</feature>
<feature type="binding site" evidence="2">
    <location>
        <begin position="90"/>
        <end position="94"/>
    </location>
    <ligand>
        <name>GTP</name>
        <dbReference type="ChEBI" id="CHEBI:37565"/>
    </ligand>
</feature>
<feature type="binding site" evidence="2">
    <location>
        <begin position="152"/>
        <end position="155"/>
    </location>
    <ligand>
        <name>GTP</name>
        <dbReference type="ChEBI" id="CHEBI:37565"/>
    </ligand>
</feature>
<gene>
    <name evidence="2" type="primary">tuf</name>
    <name type="ordered locus">STK_02690</name>
</gene>
<name>EF1A_SULTO</name>
<protein>
    <recommendedName>
        <fullName evidence="2">Elongation factor 1-alpha</fullName>
        <shortName evidence="2">EF-1-alpha</shortName>
        <ecNumber evidence="2">3.6.5.3</ecNumber>
    </recommendedName>
    <alternativeName>
        <fullName evidence="2">Elongation factor Tu</fullName>
        <shortName evidence="2">EF-Tu</shortName>
    </alternativeName>
</protein>
<keyword id="KW-0963">Cytoplasm</keyword>
<keyword id="KW-0251">Elongation factor</keyword>
<keyword id="KW-0342">GTP-binding</keyword>
<keyword id="KW-0378">Hydrolase</keyword>
<keyword id="KW-0460">Magnesium</keyword>
<keyword id="KW-0479">Metal-binding</keyword>
<keyword id="KW-0547">Nucleotide-binding</keyword>
<keyword id="KW-0648">Protein biosynthesis</keyword>
<keyword id="KW-1185">Reference proteome</keyword>
<comment type="function">
    <text evidence="2">GTP hydrolase that promotes the GTP-dependent binding of aminoacyl-tRNA to the A-site of ribosomes during protein biosynthesis.</text>
</comment>
<comment type="catalytic activity">
    <reaction evidence="2">
        <text>GTP + H2O = GDP + phosphate + H(+)</text>
        <dbReference type="Rhea" id="RHEA:19669"/>
        <dbReference type="ChEBI" id="CHEBI:15377"/>
        <dbReference type="ChEBI" id="CHEBI:15378"/>
        <dbReference type="ChEBI" id="CHEBI:37565"/>
        <dbReference type="ChEBI" id="CHEBI:43474"/>
        <dbReference type="ChEBI" id="CHEBI:58189"/>
        <dbReference type="EC" id="3.6.5.3"/>
    </reaction>
    <physiologicalReaction direction="left-to-right" evidence="2">
        <dbReference type="Rhea" id="RHEA:19670"/>
    </physiologicalReaction>
</comment>
<comment type="subcellular location">
    <subcellularLocation>
        <location evidence="2">Cytoplasm</location>
    </subcellularLocation>
</comment>
<comment type="similarity">
    <text evidence="2">Belongs to the TRAFAC class translation factor GTPase superfamily. Classic translation factor GTPase family. EF-Tu/EF-1A subfamily.</text>
</comment>
<organism>
    <name type="scientific">Sulfurisphaera tokodaii (strain DSM 16993 / JCM 10545 / NBRC 100140 / 7)</name>
    <name type="common">Sulfolobus tokodaii</name>
    <dbReference type="NCBI Taxonomy" id="273063"/>
    <lineage>
        <taxon>Archaea</taxon>
        <taxon>Thermoproteota</taxon>
        <taxon>Thermoprotei</taxon>
        <taxon>Sulfolobales</taxon>
        <taxon>Sulfolobaceae</taxon>
        <taxon>Sulfurisphaera</taxon>
    </lineage>
</organism>
<proteinExistence type="inferred from homology"/>
<accession>Q976B1</accession>
<evidence type="ECO:0000250" key="1"/>
<evidence type="ECO:0000255" key="2">
    <source>
        <dbReference type="HAMAP-Rule" id="MF_00118"/>
    </source>
</evidence>
<sequence>MSQKPHLNLIVIGHVDHGKSTLVGRLLMDRGFLDEKTIKEAEEAAKKLGKESEKYAFLLDRLKEERERGVTINLTFMRFETKKFFFTIIDAPGHRDFVKNMITGASQADAAILVVSAKKGEYEAGMSAEGQTREHIILAKTMGINQVIVAVNKMDLTDPPYDEKRFKEIVDQVGKFMKSFGFDMNKVKFVPVVAPTGENITQRSENMKWYTGPTLEEYLDQLEIPPKPVDKPLRIPIQEVYSISGVGVVPVGRVETGVLKVGDKVVFMPVGKVGEVRSIETHHTKIEKAEPGDNIGFNVRGVEKKDIKRGDVAGSLNVPPTVADEFTAQIIVIWHPTAVSVGYTPVVHIHTASVACRITELTSKIDPKTGKEVEKNPQFLKSGDSAIVKMKPIKELVVEKFREFPALGRFAMRDMGKTVGVGVVIDVKPKKVEIK</sequence>
<reference key="1">
    <citation type="journal article" date="2001" name="DNA Res.">
        <title>Complete genome sequence of an aerobic thermoacidophilic Crenarchaeon, Sulfolobus tokodaii strain7.</title>
        <authorList>
            <person name="Kawarabayasi Y."/>
            <person name="Hino Y."/>
            <person name="Horikawa H."/>
            <person name="Jin-no K."/>
            <person name="Takahashi M."/>
            <person name="Sekine M."/>
            <person name="Baba S."/>
            <person name="Ankai A."/>
            <person name="Kosugi H."/>
            <person name="Hosoyama A."/>
            <person name="Fukui S."/>
            <person name="Nagai Y."/>
            <person name="Nishijima K."/>
            <person name="Otsuka R."/>
            <person name="Nakazawa H."/>
            <person name="Takamiya M."/>
            <person name="Kato Y."/>
            <person name="Yoshizawa T."/>
            <person name="Tanaka T."/>
            <person name="Kudoh Y."/>
            <person name="Yamazaki J."/>
            <person name="Kushida N."/>
            <person name="Oguchi A."/>
            <person name="Aoki K."/>
            <person name="Masuda S."/>
            <person name="Yanagii M."/>
            <person name="Nishimura M."/>
            <person name="Yamagishi A."/>
            <person name="Oshima T."/>
            <person name="Kikuchi H."/>
        </authorList>
    </citation>
    <scope>NUCLEOTIDE SEQUENCE [LARGE SCALE GENOMIC DNA]</scope>
    <source>
        <strain>DSM 16993 / JCM 10545 / NBRC 100140 / 7</strain>
    </source>
</reference>